<comment type="function">
    <text evidence="5">SOCS family proteins form part of a classical negative feedback system that regulates cytokine signal transduction. May be a substrate-recognition component of a SCF-like ECS (Elongin BC-CUL2/5-SOCS-box protein) E3 ubiquitin-protein ligase complex which mediates the ubiquitination and subsequent proteasomal degradation of target proteins. Inhibits for instance EGF signaling by mediating the degradation of the EGF receptor/EGFR. Involved in the regulation of T-helper cell differentiation by inhibiting of the IL4 signaling pathway which promotes differentiation into the Th2 phenotype. Can also partially inhibit IL6 and LIF signaling.</text>
</comment>
<comment type="pathway">
    <text>Protein modification; protein ubiquitination.</text>
</comment>
<comment type="subunit">
    <text evidence="1 5">Interacts with IL4R; inhibits IL4 signaling (By similarity). Interacts with EGFR. Interacts with ELOB and ELOC; mediates EGFR ubiquitination and degradation.</text>
</comment>
<comment type="interaction">
    <interactant intactId="EBI-970130">
        <id>O75159</id>
    </interactant>
    <interactant intactId="EBI-1039152">
        <id>P08581</id>
        <label>MET</label>
    </interactant>
    <organismsDiffer>false</organismsDiffer>
    <experiments>2</experiments>
</comment>
<comment type="induction">
    <text evidence="5">Up-regulated by EGF (at protein level).</text>
</comment>
<comment type="domain">
    <text>The SOCS box domain mediates the interaction with the Elongin BC complex, an adapter module in different E3 ubiquitin ligase complexes.</text>
</comment>
<comment type="PTM">
    <text evidence="5">Phosphorylated. Phosphorylation is induced by EGF.</text>
</comment>
<comment type="sequence caution" evidence="6">
    <conflict type="erroneous initiation">
        <sequence resource="EMBL-CDS" id="BAA31646"/>
    </conflict>
</comment>
<sequence>MDKVGKMWNNFKYRCQNLFGHEGGSRSENVDMNSNRCLSVKEKNISIGDSTPQQQSSPLRENIALQLGLSPSKNSSRRNQNCATEIPQIVEISIEKDNDSCVTPGTRLARRDSYSRHAPWGGKKKHSCSTKTQSSLDADKKFGRTRSGLQRRERRYGVSSVHDMDSVSSRTVGSRSLRQRLQDTVGLCFPMRTYSKQSKPLFSNKRKIHLSELMLEKCPFPAGSDLAQKWHLIKQHTAPVSPHSTFFDTFDPSLVSTEDEEDRLRERRRLSIEEGVDPPPNAQIHTFEATAQVNPLYKLGPKLAPGMTEISGDSSAIPQANCDSEEDTTTLCLQSRRQKQRQISGDSHTHVSRQGAWKVHTQIDYIHCLVPDLLQITGNPCYWGVMDRYEAEALLEGKPEGTFLLRDSAQEDYLFSVSFRRYNRSLHARIEQWNHNFSFDAHDPCVFHSSTVTGLLEHYKDPSSCMFFEPLLTISLNRTFPFSLQYICRAVICRCTTYDGIDGLPLPSMLQDFLKEYHYKQKVRVRWLEREPVKAK</sequence>
<evidence type="ECO:0000250" key="1"/>
<evidence type="ECO:0000255" key="2">
    <source>
        <dbReference type="PROSITE-ProRule" id="PRU00191"/>
    </source>
</evidence>
<evidence type="ECO:0000255" key="3">
    <source>
        <dbReference type="PROSITE-ProRule" id="PRU00194"/>
    </source>
</evidence>
<evidence type="ECO:0000256" key="4">
    <source>
        <dbReference type="SAM" id="MobiDB-lite"/>
    </source>
</evidence>
<evidence type="ECO:0000269" key="5">
    <source>
    </source>
</evidence>
<evidence type="ECO:0000305" key="6"/>
<feature type="chain" id="PRO_0000181249" description="Suppressor of cytokine signaling 5">
    <location>
        <begin position="1"/>
        <end position="536"/>
    </location>
</feature>
<feature type="domain" description="SH2" evidence="2">
    <location>
        <begin position="381"/>
        <end position="476"/>
    </location>
</feature>
<feature type="domain" description="SOCS box" evidence="3">
    <location>
        <begin position="471"/>
        <end position="520"/>
    </location>
</feature>
<feature type="region of interest" description="Required for interaction with IL4R" evidence="1">
    <location>
        <begin position="1"/>
        <end position="50"/>
    </location>
</feature>
<feature type="region of interest" description="Disordered" evidence="4">
    <location>
        <begin position="115"/>
        <end position="175"/>
    </location>
</feature>
<feature type="compositionally biased region" description="Low complexity" evidence="4">
    <location>
        <begin position="158"/>
        <end position="169"/>
    </location>
</feature>
<feature type="mutagenesis site" description="Abrogates the ability to induce EGFR degradation." evidence="5">
    <original>R</original>
    <variation>K</variation>
    <location>
        <position position="406"/>
    </location>
</feature>
<feature type="mutagenesis site" description="Abrogates the interaction with ELOB and ELOC and the ability to suppress EGFR signaling; when associated with F-488." evidence="5">
    <original>L</original>
    <variation>P</variation>
    <location>
        <position position="484"/>
    </location>
</feature>
<feature type="mutagenesis site" description="Abrogates the interaction with ELOB and ELOC and the ability to suppress EGFR signaling; when associated with P-484." evidence="5">
    <original>C</original>
    <variation>F</variation>
    <location>
        <position position="488"/>
    </location>
</feature>
<feature type="sequence conflict" description="In Ref. 7; AAH32862." evidence="6" ref="7">
    <original>R</original>
    <variation>M</variation>
    <location>
        <position position="478"/>
    </location>
</feature>
<accession>O75159</accession>
<accession>Q53SD4</accession>
<accession>Q8IYZ4</accession>
<dbReference type="EMBL" id="AF073958">
    <property type="protein sequence ID" value="AAD40484.1"/>
    <property type="molecule type" value="mRNA"/>
</dbReference>
<dbReference type="EMBL" id="AB014571">
    <property type="protein sequence ID" value="BAA31646.2"/>
    <property type="status" value="ALT_INIT"/>
    <property type="molecule type" value="mRNA"/>
</dbReference>
<dbReference type="EMBL" id="AL136896">
    <property type="protein sequence ID" value="CAB66830.1"/>
    <property type="molecule type" value="mRNA"/>
</dbReference>
<dbReference type="EMBL" id="AK290194">
    <property type="protein sequence ID" value="BAF82883.1"/>
    <property type="molecule type" value="mRNA"/>
</dbReference>
<dbReference type="EMBL" id="AC020604">
    <property type="protein sequence ID" value="AAY24289.1"/>
    <property type="molecule type" value="Genomic_DNA"/>
</dbReference>
<dbReference type="EMBL" id="CH471053">
    <property type="protein sequence ID" value="EAX00236.1"/>
    <property type="molecule type" value="Genomic_DNA"/>
</dbReference>
<dbReference type="EMBL" id="CH471053">
    <property type="protein sequence ID" value="EAX00237.1"/>
    <property type="molecule type" value="Genomic_DNA"/>
</dbReference>
<dbReference type="EMBL" id="BC032862">
    <property type="protein sequence ID" value="AAH32862.1"/>
    <property type="molecule type" value="mRNA"/>
</dbReference>
<dbReference type="CCDS" id="CCDS1830.1"/>
<dbReference type="PIR" id="T46499">
    <property type="entry name" value="T46499"/>
</dbReference>
<dbReference type="RefSeq" id="NP_054730.1">
    <property type="nucleotide sequence ID" value="NM_014011.5"/>
</dbReference>
<dbReference type="RefSeq" id="NP_659198.1">
    <property type="nucleotide sequence ID" value="NM_144949.3"/>
</dbReference>
<dbReference type="BMRB" id="O75159"/>
<dbReference type="SMR" id="O75159"/>
<dbReference type="BioGRID" id="115013">
    <property type="interactions" value="22"/>
</dbReference>
<dbReference type="FunCoup" id="O75159">
    <property type="interactions" value="913"/>
</dbReference>
<dbReference type="IntAct" id="O75159">
    <property type="interactions" value="9"/>
</dbReference>
<dbReference type="MINT" id="O75159"/>
<dbReference type="STRING" id="9606.ENSP00000305133"/>
<dbReference type="iPTMnet" id="O75159"/>
<dbReference type="PhosphoSitePlus" id="O75159"/>
<dbReference type="SwissPalm" id="O75159"/>
<dbReference type="BioMuta" id="SOCS5"/>
<dbReference type="jPOST" id="O75159"/>
<dbReference type="MassIVE" id="O75159"/>
<dbReference type="PaxDb" id="9606-ENSP00000305133"/>
<dbReference type="PeptideAtlas" id="O75159"/>
<dbReference type="ProteomicsDB" id="49827"/>
<dbReference type="Antibodypedia" id="15096">
    <property type="antibodies" value="197 antibodies from 34 providers"/>
</dbReference>
<dbReference type="DNASU" id="9655"/>
<dbReference type="Ensembl" id="ENST00000306503.5">
    <property type="protein sequence ID" value="ENSP00000305133.5"/>
    <property type="gene ID" value="ENSG00000171150.9"/>
</dbReference>
<dbReference type="Ensembl" id="ENST00000394861.3">
    <property type="protein sequence ID" value="ENSP00000378330.2"/>
    <property type="gene ID" value="ENSG00000171150.9"/>
</dbReference>
<dbReference type="GeneID" id="9655"/>
<dbReference type="KEGG" id="hsa:9655"/>
<dbReference type="MANE-Select" id="ENST00000394861.3">
    <property type="protein sequence ID" value="ENSP00000378330.2"/>
    <property type="RefSeq nucleotide sequence ID" value="NM_144949.3"/>
    <property type="RefSeq protein sequence ID" value="NP_659198.1"/>
</dbReference>
<dbReference type="UCSC" id="uc002rvf.4">
    <property type="organism name" value="human"/>
</dbReference>
<dbReference type="AGR" id="HGNC:16852"/>
<dbReference type="CTD" id="9655"/>
<dbReference type="DisGeNET" id="9655"/>
<dbReference type="GeneCards" id="SOCS5"/>
<dbReference type="HGNC" id="HGNC:16852">
    <property type="gene designation" value="SOCS5"/>
</dbReference>
<dbReference type="HPA" id="ENSG00000171150">
    <property type="expression patterns" value="Low tissue specificity"/>
</dbReference>
<dbReference type="MIM" id="607094">
    <property type="type" value="gene"/>
</dbReference>
<dbReference type="neXtProt" id="NX_O75159"/>
<dbReference type="OpenTargets" id="ENSG00000171150"/>
<dbReference type="PharmGKB" id="PA134884627"/>
<dbReference type="VEuPathDB" id="HostDB:ENSG00000171150"/>
<dbReference type="eggNOG" id="KOG4566">
    <property type="taxonomic scope" value="Eukaryota"/>
</dbReference>
<dbReference type="GeneTree" id="ENSGT00940000159000"/>
<dbReference type="HOGENOM" id="CLU_035609_1_0_1"/>
<dbReference type="InParanoid" id="O75159"/>
<dbReference type="OMA" id="CQNLFNH"/>
<dbReference type="OrthoDB" id="8820570at2759"/>
<dbReference type="PAN-GO" id="O75159">
    <property type="GO annotations" value="3 GO annotations based on evolutionary models"/>
</dbReference>
<dbReference type="PhylomeDB" id="O75159"/>
<dbReference type="TreeFam" id="TF321368"/>
<dbReference type="PathwayCommons" id="O75159"/>
<dbReference type="Reactome" id="R-HSA-6785807">
    <property type="pathway name" value="Interleukin-4 and Interleukin-13 signaling"/>
</dbReference>
<dbReference type="Reactome" id="R-HSA-8951664">
    <property type="pathway name" value="Neddylation"/>
</dbReference>
<dbReference type="SignaLink" id="O75159"/>
<dbReference type="SIGNOR" id="O75159"/>
<dbReference type="UniPathway" id="UPA00143"/>
<dbReference type="BioGRID-ORCS" id="9655">
    <property type="hits" value="28 hits in 1160 CRISPR screens"/>
</dbReference>
<dbReference type="ChiTaRS" id="SOCS5">
    <property type="organism name" value="human"/>
</dbReference>
<dbReference type="GeneWiki" id="SOCS5"/>
<dbReference type="GenomeRNAi" id="9655"/>
<dbReference type="Pharos" id="O75159">
    <property type="development level" value="Tbio"/>
</dbReference>
<dbReference type="PRO" id="PR:O75159"/>
<dbReference type="Proteomes" id="UP000005640">
    <property type="component" value="Chromosome 2"/>
</dbReference>
<dbReference type="RNAct" id="O75159">
    <property type="molecule type" value="protein"/>
</dbReference>
<dbReference type="Bgee" id="ENSG00000171150">
    <property type="expression patterns" value="Expressed in sperm and 202 other cell types or tissues"/>
</dbReference>
<dbReference type="ExpressionAtlas" id="O75159">
    <property type="expression patterns" value="baseline and differential"/>
</dbReference>
<dbReference type="GO" id="GO:0005829">
    <property type="term" value="C:cytosol"/>
    <property type="evidence" value="ECO:0000304"/>
    <property type="project" value="Reactome"/>
</dbReference>
<dbReference type="GO" id="GO:0005154">
    <property type="term" value="F:epidermal growth factor receptor binding"/>
    <property type="evidence" value="ECO:0007669"/>
    <property type="project" value="Ensembl"/>
</dbReference>
<dbReference type="GO" id="GO:0030971">
    <property type="term" value="F:receptor tyrosine kinase binding"/>
    <property type="evidence" value="ECO:0000353"/>
    <property type="project" value="UniProtKB"/>
</dbReference>
<dbReference type="GO" id="GO:0007259">
    <property type="term" value="P:cell surface receptor signaling pathway via JAK-STAT"/>
    <property type="evidence" value="ECO:0007669"/>
    <property type="project" value="InterPro"/>
</dbReference>
<dbReference type="GO" id="GO:0071404">
    <property type="term" value="P:cellular response to low-density lipoprotein particle stimulus"/>
    <property type="evidence" value="ECO:0007669"/>
    <property type="project" value="Ensembl"/>
</dbReference>
<dbReference type="GO" id="GO:0019221">
    <property type="term" value="P:cytokine-mediated signaling pathway"/>
    <property type="evidence" value="ECO:0000250"/>
    <property type="project" value="UniProtKB"/>
</dbReference>
<dbReference type="GO" id="GO:0007173">
    <property type="term" value="P:epidermal growth factor receptor signaling pathway"/>
    <property type="evidence" value="ECO:0007669"/>
    <property type="project" value="Ensembl"/>
</dbReference>
<dbReference type="GO" id="GO:0035556">
    <property type="term" value="P:intracellular signal transduction"/>
    <property type="evidence" value="ECO:0007669"/>
    <property type="project" value="InterPro"/>
</dbReference>
<dbReference type="GO" id="GO:0007175">
    <property type="term" value="P:negative regulation of epidermal growth factor-activated receptor activity"/>
    <property type="evidence" value="ECO:0000314"/>
    <property type="project" value="UniProtKB"/>
</dbReference>
<dbReference type="GO" id="GO:0050728">
    <property type="term" value="P:negative regulation of inflammatory response"/>
    <property type="evidence" value="ECO:0007669"/>
    <property type="project" value="Ensembl"/>
</dbReference>
<dbReference type="GO" id="GO:0032715">
    <property type="term" value="P:negative regulation of interleukin-6 production"/>
    <property type="evidence" value="ECO:0007669"/>
    <property type="project" value="Ensembl"/>
</dbReference>
<dbReference type="GO" id="GO:0071638">
    <property type="term" value="P:negative regulation of monocyte chemotactic protein-1 production"/>
    <property type="evidence" value="ECO:0007669"/>
    <property type="project" value="Ensembl"/>
</dbReference>
<dbReference type="GO" id="GO:0009968">
    <property type="term" value="P:negative regulation of signal transduction"/>
    <property type="evidence" value="ECO:0000303"/>
    <property type="project" value="UniProtKB"/>
</dbReference>
<dbReference type="GO" id="GO:0045629">
    <property type="term" value="P:negative regulation of T-helper 2 cell differentiation"/>
    <property type="evidence" value="ECO:0000250"/>
    <property type="project" value="UniProtKB"/>
</dbReference>
<dbReference type="GO" id="GO:0032436">
    <property type="term" value="P:positive regulation of proteasomal ubiquitin-dependent protein catabolic process"/>
    <property type="evidence" value="ECO:0000315"/>
    <property type="project" value="UniProtKB"/>
</dbReference>
<dbReference type="GO" id="GO:0045627">
    <property type="term" value="P:positive regulation of T-helper 1 cell differentiation"/>
    <property type="evidence" value="ECO:0000250"/>
    <property type="project" value="UniProtKB"/>
</dbReference>
<dbReference type="GO" id="GO:0016567">
    <property type="term" value="P:protein ubiquitination"/>
    <property type="evidence" value="ECO:0007669"/>
    <property type="project" value="UniProtKB-UniPathway"/>
</dbReference>
<dbReference type="GO" id="GO:0097699">
    <property type="term" value="P:vascular endothelial cell response to fluid shear stress"/>
    <property type="evidence" value="ECO:0007669"/>
    <property type="project" value="Ensembl"/>
</dbReference>
<dbReference type="CDD" id="cd03739">
    <property type="entry name" value="SOCS_SOCS5"/>
    <property type="match status" value="1"/>
</dbReference>
<dbReference type="FunFam" id="3.30.505.10:FF:000028">
    <property type="entry name" value="Suppressor of cytokine signaling 5"/>
    <property type="match status" value="1"/>
</dbReference>
<dbReference type="Gene3D" id="3.30.505.10">
    <property type="entry name" value="SH2 domain"/>
    <property type="match status" value="1"/>
</dbReference>
<dbReference type="InterPro" id="IPR000980">
    <property type="entry name" value="SH2"/>
</dbReference>
<dbReference type="InterPro" id="IPR036860">
    <property type="entry name" value="SH2_dom_sf"/>
</dbReference>
<dbReference type="InterPro" id="IPR022252">
    <property type="entry name" value="SOCS4/SOCS5_dom"/>
</dbReference>
<dbReference type="InterPro" id="IPR037343">
    <property type="entry name" value="SOCS5_SOCS"/>
</dbReference>
<dbReference type="InterPro" id="IPR001496">
    <property type="entry name" value="SOCS_box"/>
</dbReference>
<dbReference type="InterPro" id="IPR036036">
    <property type="entry name" value="SOCS_box-like_dom_sf"/>
</dbReference>
<dbReference type="PANTHER" id="PTHR10155">
    <property type="entry name" value="PHOSPHATIDYLINOSITOL 3-KINASE REGULATORY SUBUNIT"/>
    <property type="match status" value="1"/>
</dbReference>
<dbReference type="PANTHER" id="PTHR10155:SF15">
    <property type="entry name" value="SUPPRESSOR OF CYTOKINE SIGNALING 5"/>
    <property type="match status" value="1"/>
</dbReference>
<dbReference type="Pfam" id="PF00017">
    <property type="entry name" value="SH2"/>
    <property type="match status" value="1"/>
</dbReference>
<dbReference type="Pfam" id="PF12610">
    <property type="entry name" value="SOCS"/>
    <property type="match status" value="1"/>
</dbReference>
<dbReference type="Pfam" id="PF07525">
    <property type="entry name" value="SOCS_box"/>
    <property type="match status" value="1"/>
</dbReference>
<dbReference type="SMART" id="SM00252">
    <property type="entry name" value="SH2"/>
    <property type="match status" value="1"/>
</dbReference>
<dbReference type="SMART" id="SM00253">
    <property type="entry name" value="SOCS"/>
    <property type="match status" value="1"/>
</dbReference>
<dbReference type="SMART" id="SM00969">
    <property type="entry name" value="SOCS_box"/>
    <property type="match status" value="1"/>
</dbReference>
<dbReference type="SUPFAM" id="SSF55550">
    <property type="entry name" value="SH2 domain"/>
    <property type="match status" value="1"/>
</dbReference>
<dbReference type="SUPFAM" id="SSF158235">
    <property type="entry name" value="SOCS box-like"/>
    <property type="match status" value="1"/>
</dbReference>
<dbReference type="PROSITE" id="PS50001">
    <property type="entry name" value="SH2"/>
    <property type="match status" value="1"/>
</dbReference>
<dbReference type="PROSITE" id="PS50225">
    <property type="entry name" value="SOCS"/>
    <property type="match status" value="1"/>
</dbReference>
<organism>
    <name type="scientific">Homo sapiens</name>
    <name type="common">Human</name>
    <dbReference type="NCBI Taxonomy" id="9606"/>
    <lineage>
        <taxon>Eukaryota</taxon>
        <taxon>Metazoa</taxon>
        <taxon>Chordata</taxon>
        <taxon>Craniata</taxon>
        <taxon>Vertebrata</taxon>
        <taxon>Euteleostomi</taxon>
        <taxon>Mammalia</taxon>
        <taxon>Eutheria</taxon>
        <taxon>Euarchontoglires</taxon>
        <taxon>Primates</taxon>
        <taxon>Haplorrhini</taxon>
        <taxon>Catarrhini</taxon>
        <taxon>Hominidae</taxon>
        <taxon>Homo</taxon>
    </lineage>
</organism>
<reference key="1">
    <citation type="journal article" date="2000" name="Cytogenet. Cell Genet.">
        <title>Cloning and expression of CIS6, chromosomal assignment to 3p22 and 2p21 by in situ hybridization.</title>
        <authorList>
            <person name="Magrangeas F."/>
            <person name="Apiou F."/>
            <person name="Denis S."/>
            <person name="Weidle U."/>
            <person name="Jacques Y."/>
            <person name="Minvielle S."/>
        </authorList>
    </citation>
    <scope>NUCLEOTIDE SEQUENCE [MRNA]</scope>
    <source>
        <tissue>Placenta</tissue>
    </source>
</reference>
<reference key="2">
    <citation type="journal article" date="1998" name="DNA Res.">
        <title>Prediction of the coding sequences of unidentified human genes. X. The complete sequences of 100 new cDNA clones from brain which can code for large proteins in vitro.</title>
        <authorList>
            <person name="Ishikawa K."/>
            <person name="Nagase T."/>
            <person name="Suyama M."/>
            <person name="Miyajima N."/>
            <person name="Tanaka A."/>
            <person name="Kotani H."/>
            <person name="Nomura N."/>
            <person name="Ohara O."/>
        </authorList>
    </citation>
    <scope>NUCLEOTIDE SEQUENCE [LARGE SCALE MRNA]</scope>
    <source>
        <tissue>Brain</tissue>
    </source>
</reference>
<reference key="3">
    <citation type="journal article" date="2001" name="Genome Res.">
        <title>Towards a catalog of human genes and proteins: sequencing and analysis of 500 novel complete protein coding human cDNAs.</title>
        <authorList>
            <person name="Wiemann S."/>
            <person name="Weil B."/>
            <person name="Wellenreuther R."/>
            <person name="Gassenhuber J."/>
            <person name="Glassl S."/>
            <person name="Ansorge W."/>
            <person name="Boecher M."/>
            <person name="Bloecker H."/>
            <person name="Bauersachs S."/>
            <person name="Blum H."/>
            <person name="Lauber J."/>
            <person name="Duesterhoeft A."/>
            <person name="Beyer A."/>
            <person name="Koehrer K."/>
            <person name="Strack N."/>
            <person name="Mewes H.-W."/>
            <person name="Ottenwaelder B."/>
            <person name="Obermaier B."/>
            <person name="Tampe J."/>
            <person name="Heubner D."/>
            <person name="Wambutt R."/>
            <person name="Korn B."/>
            <person name="Klein M."/>
            <person name="Poustka A."/>
        </authorList>
    </citation>
    <scope>NUCLEOTIDE SEQUENCE [LARGE SCALE MRNA]</scope>
    <source>
        <tissue>Testis</tissue>
    </source>
</reference>
<reference key="4">
    <citation type="journal article" date="2004" name="Nat. Genet.">
        <title>Complete sequencing and characterization of 21,243 full-length human cDNAs.</title>
        <authorList>
            <person name="Ota T."/>
            <person name="Suzuki Y."/>
            <person name="Nishikawa T."/>
            <person name="Otsuki T."/>
            <person name="Sugiyama T."/>
            <person name="Irie R."/>
            <person name="Wakamatsu A."/>
            <person name="Hayashi K."/>
            <person name="Sato H."/>
            <person name="Nagai K."/>
            <person name="Kimura K."/>
            <person name="Makita H."/>
            <person name="Sekine M."/>
            <person name="Obayashi M."/>
            <person name="Nishi T."/>
            <person name="Shibahara T."/>
            <person name="Tanaka T."/>
            <person name="Ishii S."/>
            <person name="Yamamoto J."/>
            <person name="Saito K."/>
            <person name="Kawai Y."/>
            <person name="Isono Y."/>
            <person name="Nakamura Y."/>
            <person name="Nagahari K."/>
            <person name="Murakami K."/>
            <person name="Yasuda T."/>
            <person name="Iwayanagi T."/>
            <person name="Wagatsuma M."/>
            <person name="Shiratori A."/>
            <person name="Sudo H."/>
            <person name="Hosoiri T."/>
            <person name="Kaku Y."/>
            <person name="Kodaira H."/>
            <person name="Kondo H."/>
            <person name="Sugawara M."/>
            <person name="Takahashi M."/>
            <person name="Kanda K."/>
            <person name="Yokoi T."/>
            <person name="Furuya T."/>
            <person name="Kikkawa E."/>
            <person name="Omura Y."/>
            <person name="Abe K."/>
            <person name="Kamihara K."/>
            <person name="Katsuta N."/>
            <person name="Sato K."/>
            <person name="Tanikawa M."/>
            <person name="Yamazaki M."/>
            <person name="Ninomiya K."/>
            <person name="Ishibashi T."/>
            <person name="Yamashita H."/>
            <person name="Murakawa K."/>
            <person name="Fujimori K."/>
            <person name="Tanai H."/>
            <person name="Kimata M."/>
            <person name="Watanabe M."/>
            <person name="Hiraoka S."/>
            <person name="Chiba Y."/>
            <person name="Ishida S."/>
            <person name="Ono Y."/>
            <person name="Takiguchi S."/>
            <person name="Watanabe S."/>
            <person name="Yosida M."/>
            <person name="Hotuta T."/>
            <person name="Kusano J."/>
            <person name="Kanehori K."/>
            <person name="Takahashi-Fujii A."/>
            <person name="Hara H."/>
            <person name="Tanase T.-O."/>
            <person name="Nomura Y."/>
            <person name="Togiya S."/>
            <person name="Komai F."/>
            <person name="Hara R."/>
            <person name="Takeuchi K."/>
            <person name="Arita M."/>
            <person name="Imose N."/>
            <person name="Musashino K."/>
            <person name="Yuuki H."/>
            <person name="Oshima A."/>
            <person name="Sasaki N."/>
            <person name="Aotsuka S."/>
            <person name="Yoshikawa Y."/>
            <person name="Matsunawa H."/>
            <person name="Ichihara T."/>
            <person name="Shiohata N."/>
            <person name="Sano S."/>
            <person name="Moriya S."/>
            <person name="Momiyama H."/>
            <person name="Satoh N."/>
            <person name="Takami S."/>
            <person name="Terashima Y."/>
            <person name="Suzuki O."/>
            <person name="Nakagawa S."/>
            <person name="Senoh A."/>
            <person name="Mizoguchi H."/>
            <person name="Goto Y."/>
            <person name="Shimizu F."/>
            <person name="Wakebe H."/>
            <person name="Hishigaki H."/>
            <person name="Watanabe T."/>
            <person name="Sugiyama A."/>
            <person name="Takemoto M."/>
            <person name="Kawakami B."/>
            <person name="Yamazaki M."/>
            <person name="Watanabe K."/>
            <person name="Kumagai A."/>
            <person name="Itakura S."/>
            <person name="Fukuzumi Y."/>
            <person name="Fujimori Y."/>
            <person name="Komiyama M."/>
            <person name="Tashiro H."/>
            <person name="Tanigami A."/>
            <person name="Fujiwara T."/>
            <person name="Ono T."/>
            <person name="Yamada K."/>
            <person name="Fujii Y."/>
            <person name="Ozaki K."/>
            <person name="Hirao M."/>
            <person name="Ohmori Y."/>
            <person name="Kawabata A."/>
            <person name="Hikiji T."/>
            <person name="Kobatake N."/>
            <person name="Inagaki H."/>
            <person name="Ikema Y."/>
            <person name="Okamoto S."/>
            <person name="Okitani R."/>
            <person name="Kawakami T."/>
            <person name="Noguchi S."/>
            <person name="Itoh T."/>
            <person name="Shigeta K."/>
            <person name="Senba T."/>
            <person name="Matsumura K."/>
            <person name="Nakajima Y."/>
            <person name="Mizuno T."/>
            <person name="Morinaga M."/>
            <person name="Sasaki M."/>
            <person name="Togashi T."/>
            <person name="Oyama M."/>
            <person name="Hata H."/>
            <person name="Watanabe M."/>
            <person name="Komatsu T."/>
            <person name="Mizushima-Sugano J."/>
            <person name="Satoh T."/>
            <person name="Shirai Y."/>
            <person name="Takahashi Y."/>
            <person name="Nakagawa K."/>
            <person name="Okumura K."/>
            <person name="Nagase T."/>
            <person name="Nomura N."/>
            <person name="Kikuchi H."/>
            <person name="Masuho Y."/>
            <person name="Yamashita R."/>
            <person name="Nakai K."/>
            <person name="Yada T."/>
            <person name="Nakamura Y."/>
            <person name="Ohara O."/>
            <person name="Isogai T."/>
            <person name="Sugano S."/>
        </authorList>
    </citation>
    <scope>NUCLEOTIDE SEQUENCE [LARGE SCALE MRNA]</scope>
    <source>
        <tissue>Thalamus</tissue>
    </source>
</reference>
<reference key="5">
    <citation type="journal article" date="2005" name="Nature">
        <title>Generation and annotation of the DNA sequences of human chromosomes 2 and 4.</title>
        <authorList>
            <person name="Hillier L.W."/>
            <person name="Graves T.A."/>
            <person name="Fulton R.S."/>
            <person name="Fulton L.A."/>
            <person name="Pepin K.H."/>
            <person name="Minx P."/>
            <person name="Wagner-McPherson C."/>
            <person name="Layman D."/>
            <person name="Wylie K."/>
            <person name="Sekhon M."/>
            <person name="Becker M.C."/>
            <person name="Fewell G.A."/>
            <person name="Delehaunty K.D."/>
            <person name="Miner T.L."/>
            <person name="Nash W.E."/>
            <person name="Kremitzki C."/>
            <person name="Oddy L."/>
            <person name="Du H."/>
            <person name="Sun H."/>
            <person name="Bradshaw-Cordum H."/>
            <person name="Ali J."/>
            <person name="Carter J."/>
            <person name="Cordes M."/>
            <person name="Harris A."/>
            <person name="Isak A."/>
            <person name="van Brunt A."/>
            <person name="Nguyen C."/>
            <person name="Du F."/>
            <person name="Courtney L."/>
            <person name="Kalicki J."/>
            <person name="Ozersky P."/>
            <person name="Abbott S."/>
            <person name="Armstrong J."/>
            <person name="Belter E.A."/>
            <person name="Caruso L."/>
            <person name="Cedroni M."/>
            <person name="Cotton M."/>
            <person name="Davidson T."/>
            <person name="Desai A."/>
            <person name="Elliott G."/>
            <person name="Erb T."/>
            <person name="Fronick C."/>
            <person name="Gaige T."/>
            <person name="Haakenson W."/>
            <person name="Haglund K."/>
            <person name="Holmes A."/>
            <person name="Harkins R."/>
            <person name="Kim K."/>
            <person name="Kruchowski S.S."/>
            <person name="Strong C.M."/>
            <person name="Grewal N."/>
            <person name="Goyea E."/>
            <person name="Hou S."/>
            <person name="Levy A."/>
            <person name="Martinka S."/>
            <person name="Mead K."/>
            <person name="McLellan M.D."/>
            <person name="Meyer R."/>
            <person name="Randall-Maher J."/>
            <person name="Tomlinson C."/>
            <person name="Dauphin-Kohlberg S."/>
            <person name="Kozlowicz-Reilly A."/>
            <person name="Shah N."/>
            <person name="Swearengen-Shahid S."/>
            <person name="Snider J."/>
            <person name="Strong J.T."/>
            <person name="Thompson J."/>
            <person name="Yoakum M."/>
            <person name="Leonard S."/>
            <person name="Pearman C."/>
            <person name="Trani L."/>
            <person name="Radionenko M."/>
            <person name="Waligorski J.E."/>
            <person name="Wang C."/>
            <person name="Rock S.M."/>
            <person name="Tin-Wollam A.-M."/>
            <person name="Maupin R."/>
            <person name="Latreille P."/>
            <person name="Wendl M.C."/>
            <person name="Yang S.-P."/>
            <person name="Pohl C."/>
            <person name="Wallis J.W."/>
            <person name="Spieth J."/>
            <person name="Bieri T.A."/>
            <person name="Berkowicz N."/>
            <person name="Nelson J.O."/>
            <person name="Osborne J."/>
            <person name="Ding L."/>
            <person name="Meyer R."/>
            <person name="Sabo A."/>
            <person name="Shotland Y."/>
            <person name="Sinha P."/>
            <person name="Wohldmann P.E."/>
            <person name="Cook L.L."/>
            <person name="Hickenbotham M.T."/>
            <person name="Eldred J."/>
            <person name="Williams D."/>
            <person name="Jones T.A."/>
            <person name="She X."/>
            <person name="Ciccarelli F.D."/>
            <person name="Izaurralde E."/>
            <person name="Taylor J."/>
            <person name="Schmutz J."/>
            <person name="Myers R.M."/>
            <person name="Cox D.R."/>
            <person name="Huang X."/>
            <person name="McPherson J.D."/>
            <person name="Mardis E.R."/>
            <person name="Clifton S.W."/>
            <person name="Warren W.C."/>
            <person name="Chinwalla A.T."/>
            <person name="Eddy S.R."/>
            <person name="Marra M.A."/>
            <person name="Ovcharenko I."/>
            <person name="Furey T.S."/>
            <person name="Miller W."/>
            <person name="Eichler E.E."/>
            <person name="Bork P."/>
            <person name="Suyama M."/>
            <person name="Torrents D."/>
            <person name="Waterston R.H."/>
            <person name="Wilson R.K."/>
        </authorList>
    </citation>
    <scope>NUCLEOTIDE SEQUENCE [LARGE SCALE GENOMIC DNA]</scope>
</reference>
<reference key="6">
    <citation type="submission" date="2005-09" db="EMBL/GenBank/DDBJ databases">
        <authorList>
            <person name="Mural R.J."/>
            <person name="Istrail S."/>
            <person name="Sutton G."/>
            <person name="Florea L."/>
            <person name="Halpern A.L."/>
            <person name="Mobarry C.M."/>
            <person name="Lippert R."/>
            <person name="Walenz B."/>
            <person name="Shatkay H."/>
            <person name="Dew I."/>
            <person name="Miller J.R."/>
            <person name="Flanigan M.J."/>
            <person name="Edwards N.J."/>
            <person name="Bolanos R."/>
            <person name="Fasulo D."/>
            <person name="Halldorsson B.V."/>
            <person name="Hannenhalli S."/>
            <person name="Turner R."/>
            <person name="Yooseph S."/>
            <person name="Lu F."/>
            <person name="Nusskern D.R."/>
            <person name="Shue B.C."/>
            <person name="Zheng X.H."/>
            <person name="Zhong F."/>
            <person name="Delcher A.L."/>
            <person name="Huson D.H."/>
            <person name="Kravitz S.A."/>
            <person name="Mouchard L."/>
            <person name="Reinert K."/>
            <person name="Remington K.A."/>
            <person name="Clark A.G."/>
            <person name="Waterman M.S."/>
            <person name="Eichler E.E."/>
            <person name="Adams M.D."/>
            <person name="Hunkapiller M.W."/>
            <person name="Myers E.W."/>
            <person name="Venter J.C."/>
        </authorList>
    </citation>
    <scope>NUCLEOTIDE SEQUENCE [LARGE SCALE GENOMIC DNA]</scope>
</reference>
<reference key="7">
    <citation type="journal article" date="2004" name="Genome Res.">
        <title>The status, quality, and expansion of the NIH full-length cDNA project: the Mammalian Gene Collection (MGC).</title>
        <authorList>
            <consortium name="The MGC Project Team"/>
        </authorList>
    </citation>
    <scope>NUCLEOTIDE SEQUENCE [LARGE SCALE MRNA]</scope>
    <source>
        <tissue>Brain</tissue>
    </source>
</reference>
<reference key="8">
    <citation type="journal article" date="2005" name="J. Biol. Chem.">
        <title>Suppressors of cytokine signaling 4 and 5 regulate epidermal growth factor receptor signaling.</title>
        <authorList>
            <person name="Kario E."/>
            <person name="Marmor M.D."/>
            <person name="Adamsky K."/>
            <person name="Citri A."/>
            <person name="Amit I."/>
            <person name="Amariglio N."/>
            <person name="Rechavi G."/>
            <person name="Yarden Y."/>
        </authorList>
    </citation>
    <scope>FUNCTION IN EGFR DEGRADATION</scope>
    <scope>INDUCTION BY EGF</scope>
    <scope>PHOSPHORYLATION</scope>
    <scope>MUTAGENESIS OF ARG-406; LEU-484 AND CYS-488</scope>
    <scope>INTERACTION WITH EGFR; ELOB AND ELOC</scope>
</reference>
<keyword id="KW-0341">Growth regulation</keyword>
<keyword id="KW-1267">Proteomics identification</keyword>
<keyword id="KW-1185">Reference proteome</keyword>
<keyword id="KW-0727">SH2 domain</keyword>
<keyword id="KW-0734">Signal transduction inhibitor</keyword>
<keyword id="KW-0833">Ubl conjugation pathway</keyword>
<gene>
    <name type="primary">SOCS5</name>
    <name type="synonym">CIS6</name>
    <name type="synonym">CISH5</name>
    <name type="synonym">CISH6</name>
    <name type="synonym">KIAA0671</name>
</gene>
<name>SOCS5_HUMAN</name>
<proteinExistence type="evidence at protein level"/>
<protein>
    <recommendedName>
        <fullName>Suppressor of cytokine signaling 5</fullName>
        <shortName>SOCS-5</shortName>
    </recommendedName>
    <alternativeName>
        <fullName>Cytokine-inducible SH2 protein 6</fullName>
        <shortName>CIS-6</shortName>
    </alternativeName>
    <alternativeName>
        <fullName>Cytokine-inducible SH2-containing protein 5</fullName>
    </alternativeName>
</protein>